<comment type="function">
    <text evidence="1">Stimulates the secretion of gonadotropins.</text>
</comment>
<comment type="subcellular location">
    <subcellularLocation>
        <location>Secreted</location>
    </subcellularLocation>
</comment>
<comment type="similarity">
    <text evidence="3">Belongs to the GnRH family.</text>
</comment>
<feature type="signal peptide" evidence="1">
    <location>
        <begin position="1"/>
        <end position="23"/>
    </location>
</feature>
<feature type="chain" id="PRO_0000012529" description="Progonadoliberin-3">
    <location>
        <begin position="24"/>
        <end position="94"/>
    </location>
</feature>
<feature type="peptide" id="PRO_0000012530" description="Gonadoliberin-3">
    <location>
        <begin position="24"/>
        <end position="33"/>
    </location>
</feature>
<feature type="peptide" id="PRO_0000012531" description="GnRH-associated peptide 3" evidence="2">
    <location>
        <begin position="37"/>
        <end position="94"/>
    </location>
</feature>
<feature type="modified residue" description="Pyrrolidone carboxylic acid" evidence="1">
    <location>
        <position position="24"/>
    </location>
</feature>
<feature type="modified residue" description="Glycine amide" evidence="1">
    <location>
        <position position="33"/>
    </location>
</feature>
<reference key="1">
    <citation type="journal article" date="1997" name="J. Mol. Endocrinol.">
        <title>Isolation and characterisation of mRNA encoding the salmon- and chicken- II type gonadotrophin-releasing hormones in the teleost fish Rutilus rutilus (Cyprinidae).</title>
        <authorList>
            <person name="Penlington M.C."/>
            <person name="Williams M.A."/>
            <person name="Sumpter J.P."/>
            <person name="Rand-Weaver M."/>
            <person name="Hoole D."/>
            <person name="Arme C."/>
        </authorList>
    </citation>
    <scope>NUCLEOTIDE SEQUENCE [MRNA]</scope>
    <source>
        <tissue>Olfactory bulb</tissue>
    </source>
</reference>
<name>GON3_RUTRU</name>
<evidence type="ECO:0000250" key="1"/>
<evidence type="ECO:0000255" key="2"/>
<evidence type="ECO:0000305" key="3"/>
<dbReference type="EMBL" id="U60667">
    <property type="protein sequence ID" value="AAB65821.1"/>
    <property type="molecule type" value="mRNA"/>
</dbReference>
<dbReference type="GO" id="GO:0005615">
    <property type="term" value="C:extracellular space"/>
    <property type="evidence" value="ECO:0000250"/>
    <property type="project" value="UniProtKB"/>
</dbReference>
<dbReference type="GO" id="GO:0005183">
    <property type="term" value="F:gonadotropin hormone-releasing hormone activity"/>
    <property type="evidence" value="ECO:0007669"/>
    <property type="project" value="TreeGrafter"/>
</dbReference>
<dbReference type="GO" id="GO:0031530">
    <property type="term" value="F:gonadotropin-releasing hormone receptor binding"/>
    <property type="evidence" value="ECO:0007669"/>
    <property type="project" value="TreeGrafter"/>
</dbReference>
<dbReference type="InterPro" id="IPR002012">
    <property type="entry name" value="GnRH"/>
</dbReference>
<dbReference type="InterPro" id="IPR019792">
    <property type="entry name" value="Gonadoliberin"/>
</dbReference>
<dbReference type="PANTHER" id="PTHR10522">
    <property type="entry name" value="GONADOLIBERIN"/>
    <property type="match status" value="1"/>
</dbReference>
<dbReference type="PANTHER" id="PTHR10522:SF6">
    <property type="entry name" value="PROGONADOLIBERIN-2"/>
    <property type="match status" value="1"/>
</dbReference>
<dbReference type="Pfam" id="PF00446">
    <property type="entry name" value="GnRH"/>
    <property type="match status" value="1"/>
</dbReference>
<dbReference type="PROSITE" id="PS00473">
    <property type="entry name" value="GNRH"/>
    <property type="match status" value="1"/>
</dbReference>
<organism>
    <name type="scientific">Rutilus rutilus</name>
    <name type="common">Roach</name>
    <dbReference type="NCBI Taxonomy" id="48668"/>
    <lineage>
        <taxon>Eukaryota</taxon>
        <taxon>Metazoa</taxon>
        <taxon>Chordata</taxon>
        <taxon>Craniata</taxon>
        <taxon>Vertebrata</taxon>
        <taxon>Euteleostomi</taxon>
        <taxon>Actinopterygii</taxon>
        <taxon>Neopterygii</taxon>
        <taxon>Teleostei</taxon>
        <taxon>Ostariophysi</taxon>
        <taxon>Cypriniformes</taxon>
        <taxon>Leuciscidae</taxon>
        <taxon>Leuciscinae</taxon>
        <taxon>Rutilus</taxon>
    </lineage>
</organism>
<keyword id="KW-0027">Amidation</keyword>
<keyword id="KW-0165">Cleavage on pair of basic residues</keyword>
<keyword id="KW-0372">Hormone</keyword>
<keyword id="KW-0873">Pyrrolidone carboxylic acid</keyword>
<keyword id="KW-0964">Secreted</keyword>
<keyword id="KW-0732">Signal</keyword>
<sequence length="94" mass="10683">MEWKGRVLVQLLMLVCVLEVSLCQHWSYGWLPGGKRSVGEVEATIRMMDGGDTLLSIPADTPMEQLSPIHIMNEVDAEGFPLKEQRFPNRRGRM</sequence>
<gene>
    <name type="primary">gnrh3</name>
</gene>
<proteinExistence type="inferred from homology"/>
<protein>
    <recommendedName>
        <fullName>Progonadoliberin-3</fullName>
    </recommendedName>
    <alternativeName>
        <fullName>Progonadoliberin III</fullName>
    </alternativeName>
    <component>
        <recommendedName>
            <fullName>Gonadoliberin-3</fullName>
        </recommendedName>
        <alternativeName>
            <fullName>Gonadoliberin III</fullName>
        </alternativeName>
        <alternativeName>
            <fullName>Gonadotropin-releasing hormone III</fullName>
            <shortName>GnRH III</shortName>
        </alternativeName>
        <alternativeName>
            <fullName>Luliberin III</fullName>
        </alternativeName>
        <alternativeName>
            <fullName>Luteinizing hormone-releasing hormone III</fullName>
            <shortName>LH-RH III</shortName>
        </alternativeName>
    </component>
    <component>
        <recommendedName>
            <fullName>GnRH-associated peptide 3</fullName>
        </recommendedName>
        <alternativeName>
            <fullName>GnRH-associated peptide III</fullName>
        </alternativeName>
    </component>
</protein>
<accession>Q92106</accession>